<comment type="function">
    <text evidence="6 7 8 9">DNA-binding transcription factor that specifically binds heat shock promoter elements (HSE) and activates transcription. With HSP90, is required for the modulation of the chaperone levels in response to growth temperature, rather than the activation of acute responses to sudden thermal transitions. Activated during infection and contributes to full virulence.</text>
</comment>
<comment type="subunit">
    <text evidence="1 9">Homotrimer (By similarity). Homotrimerization increases the affinity of HSF1 to DNA (By similarity). Interacts with HSP90 (PubMed:23300438).</text>
</comment>
<comment type="subcellular location">
    <subcellularLocation>
        <location evidence="1">Nucleus</location>
    </subcellularLocation>
</comment>
<comment type="induction">
    <text evidence="5">Induced during exposure to the weak acid stress of acetic acid, through the regulation by the transcription factor MNL1.</text>
</comment>
<comment type="PTM">
    <text evidence="6 7 8">Activated by phosphorylation of at least Ser-570, Thr-574, Ser-576 and Thr-577 in response to heat shock. Additional unidentified residues are also phosphorylated in response to heat shock.</text>
</comment>
<comment type="disruption phenotype">
    <text evidence="6">Leads to lethality.</text>
</comment>
<comment type="similarity">
    <text evidence="11">Belongs to the HSF family.</text>
</comment>
<gene>
    <name evidence="12" type="primary">CTA8</name>
    <name evidence="10" type="synonym">HSF1</name>
    <name evidence="12" type="ordered locus">CAALFM_C109170WA</name>
    <name evidence="12" type="ORF">CaO19.12238</name>
    <name evidence="12" type="ORF">CaO19.4775</name>
</gene>
<feature type="chain" id="PRO_0000426084" description="Heat shock transcription factor">
    <location>
        <begin position="1"/>
        <end position="760"/>
    </location>
</feature>
<feature type="DNA-binding region" evidence="3">
    <location>
        <begin position="276"/>
        <end position="385"/>
    </location>
</feature>
<feature type="region of interest" description="Disordered" evidence="4">
    <location>
        <begin position="1"/>
        <end position="132"/>
    </location>
</feature>
<feature type="region of interest" description="Disordered" evidence="4">
    <location>
        <begin position="206"/>
        <end position="276"/>
    </location>
</feature>
<feature type="region of interest" description="Involved in trimerization" evidence="2">
    <location>
        <begin position="414"/>
        <end position="467"/>
    </location>
</feature>
<feature type="region of interest" description="Disordered" evidence="4">
    <location>
        <begin position="492"/>
        <end position="545"/>
    </location>
</feature>
<feature type="region of interest" description="Disordered" evidence="4">
    <location>
        <begin position="560"/>
        <end position="582"/>
    </location>
</feature>
<feature type="region of interest" description="Disordered" evidence="4">
    <location>
        <begin position="609"/>
        <end position="630"/>
    </location>
</feature>
<feature type="region of interest" description="Disordered" evidence="4">
    <location>
        <begin position="674"/>
        <end position="760"/>
    </location>
</feature>
<feature type="coiled-coil region" evidence="3">
    <location>
        <begin position="646"/>
        <end position="684"/>
    </location>
</feature>
<feature type="compositionally biased region" description="Polar residues" evidence="4">
    <location>
        <begin position="19"/>
        <end position="31"/>
    </location>
</feature>
<feature type="compositionally biased region" description="Polar residues" evidence="4">
    <location>
        <begin position="38"/>
        <end position="88"/>
    </location>
</feature>
<feature type="compositionally biased region" description="Basic and acidic residues" evidence="4">
    <location>
        <begin position="119"/>
        <end position="130"/>
    </location>
</feature>
<feature type="compositionally biased region" description="Low complexity" evidence="4">
    <location>
        <begin position="221"/>
        <end position="247"/>
    </location>
</feature>
<feature type="compositionally biased region" description="Polar residues" evidence="4">
    <location>
        <begin position="515"/>
        <end position="539"/>
    </location>
</feature>
<feature type="compositionally biased region" description="Low complexity" evidence="4">
    <location>
        <begin position="613"/>
        <end position="628"/>
    </location>
</feature>
<feature type="compositionally biased region" description="Polar residues" evidence="4">
    <location>
        <begin position="701"/>
        <end position="722"/>
    </location>
</feature>
<feature type="compositionally biased region" description="Polar residues" evidence="4">
    <location>
        <begin position="731"/>
        <end position="742"/>
    </location>
</feature>
<feature type="compositionally biased region" description="Basic and acidic residues" evidence="4">
    <location>
        <begin position="744"/>
        <end position="760"/>
    </location>
</feature>
<feature type="modified residue" description="Phosphoserine" evidence="7">
    <location>
        <position position="570"/>
    </location>
</feature>
<feature type="modified residue" description="Phosphothreonine" evidence="7">
    <location>
        <position position="574"/>
    </location>
</feature>
<feature type="modified residue" description="Phosphoserine" evidence="7">
    <location>
        <position position="576"/>
    </location>
</feature>
<feature type="modified residue" description="Phosphothreonine" evidence="7">
    <location>
        <position position="577"/>
    </location>
</feature>
<feature type="mutagenesis site" description="Decreases thermotolerance; when associated with A-574, A-576 and A-577." evidence="7">
    <original>S</original>
    <variation>A</variation>
    <location>
        <position position="570"/>
    </location>
</feature>
<feature type="mutagenesis site" description="Mimics phosphorylation and increases thermotolerance; when associated with E-574, E-576 and E-577." evidence="7">
    <original>S</original>
    <variation>E</variation>
    <location>
        <position position="570"/>
    </location>
</feature>
<feature type="mutagenesis site" description="Decreases thermotolerance; when associated with A-570, A-576 and A-577." evidence="7">
    <original>T</original>
    <variation>A</variation>
    <location>
        <position position="574"/>
    </location>
</feature>
<feature type="mutagenesis site" description="Mimics phosphorylation and increases thermotolerance; when associated with E-570, E-576 and E-577." evidence="7">
    <original>T</original>
    <variation>E</variation>
    <location>
        <position position="574"/>
    </location>
</feature>
<feature type="mutagenesis site" description="Decreases thermotolerance; when associated with A-570, A-556 and A-577." evidence="7">
    <original>S</original>
    <variation>A</variation>
    <location>
        <position position="576"/>
    </location>
</feature>
<feature type="mutagenesis site" description="Mimics phosphorylation and increases thermotolerance; when associated with E-570, E-556 and E-577." evidence="7">
    <original>S</original>
    <variation>E</variation>
    <location>
        <position position="576"/>
    </location>
</feature>
<feature type="mutagenesis site" description="Decreases thermotolerance; when associated with A-570, A-574 and A-576." evidence="7">
    <original>T</original>
    <variation>A</variation>
    <location>
        <position position="577"/>
    </location>
</feature>
<feature type="mutagenesis site" description="Mimics phosphorylation and increases thermotolerance; when associated with E-570, E-574 and E-576." evidence="7">
    <original>T</original>
    <variation>E</variation>
    <location>
        <position position="577"/>
    </location>
</feature>
<accession>Q5AQ33</accession>
<accession>A0A1D8PEH8</accession>
<accession>Q5APJ0</accession>
<sequence length="760" mass="86197">MIMNMTTDYRDPLLDLFGTESNSGNETSSPSDIPVINRSGTFNQQQFSPLLTQQSLYNTPNSGSTPNIFDPNYTQMQEEQTSPSSNKLQPEDPPRKKRNTRSQTKIHQQSEGDEYNSNDYKDSIDLDKPPVVEPSPPFFVESDTTPEFVIPTPTSEQQQQQHHELIAQDYQRSNNSNQFGNLTHYEPNLPPLPPLSESILPQTNTFHPLVLPHDPRHAITAGPANNSQQQQQQQQQDSSIPSDGISSKIQQLHAPSLSNNQSASQRKKKESSGPKTRPAFVMKIWSMVNDPANHEYIRWNDDGKTFQVFHREDFMKVILPKYFKHNNFASFVRQLNMYGWHKVQDVANGTLNQNSDKNGQDEIWQFENPNFIKDREDLLDKIVRNKSSSNQDDVSGVSFNGINNSANLSLILQELETIKMNQYVISEDLRRVRQDNKMLWQENYLNRERNQVQGRTLDKILKFLSVVYGNNANKILNGHGFADFNDSNNIMTQYRPSPMGSPLLSRPQTQPPPSNSRFARDNNQTAQPTYESPLSTSDTNNNNNNTFEYQQAVNRPRLMLTNRAHSRRPSMSRTKSTPEGSIEEIIRSYSNDKAAESNVNRMYEQLVGHQPGATTNNNNHSSSTAISAPSPRHSFLQELNLPGTPRNLDDLEKHINKEGQSIQQVQDWIDKLAQEQHEKQQQQQGNDDDDDFDVNEFLKDATTTPSSNVPNGGHYNNGNISFVGSPIAMTPGSNVSSNINDSDGNEKKSKKRSIEEVSDH</sequence>
<dbReference type="EMBL" id="CP017623">
    <property type="protein sequence ID" value="AOW26551.1"/>
    <property type="molecule type" value="Genomic_DNA"/>
</dbReference>
<dbReference type="RefSeq" id="XP_723461.2">
    <property type="nucleotide sequence ID" value="XM_718368.2"/>
</dbReference>
<dbReference type="SMR" id="Q5AQ33"/>
<dbReference type="BioGRID" id="1218041">
    <property type="interactions" value="2"/>
</dbReference>
<dbReference type="STRING" id="237561.Q5AQ33"/>
<dbReference type="iPTMnet" id="Q5AQ33"/>
<dbReference type="PeptideAtlas" id="Q5AQ33"/>
<dbReference type="EnsemblFungi" id="C1_09170W_A-T">
    <property type="protein sequence ID" value="C1_09170W_A-T-p1"/>
    <property type="gene ID" value="C1_09170W_A"/>
</dbReference>
<dbReference type="GeneID" id="3634947"/>
<dbReference type="KEGG" id="cal:CAALFM_C109170WA"/>
<dbReference type="CGD" id="CAL0000175059">
    <property type="gene designation" value="CTA8"/>
</dbReference>
<dbReference type="VEuPathDB" id="FungiDB:C1_09170W_A"/>
<dbReference type="eggNOG" id="KOG0627">
    <property type="taxonomic scope" value="Eukaryota"/>
</dbReference>
<dbReference type="HOGENOM" id="CLU_366803_0_0_1"/>
<dbReference type="InParanoid" id="Q5AQ33"/>
<dbReference type="OrthoDB" id="60033at2759"/>
<dbReference type="PHI-base" id="PHI:2565"/>
<dbReference type="PRO" id="PR:Q5AQ33"/>
<dbReference type="Proteomes" id="UP000000559">
    <property type="component" value="Chromosome 1"/>
</dbReference>
<dbReference type="GO" id="GO:0005634">
    <property type="term" value="C:nucleus"/>
    <property type="evidence" value="ECO:0000305"/>
    <property type="project" value="CGD"/>
</dbReference>
<dbReference type="GO" id="GO:0003700">
    <property type="term" value="F:DNA-binding transcription factor activity"/>
    <property type="evidence" value="ECO:0000266"/>
    <property type="project" value="CGD"/>
</dbReference>
<dbReference type="GO" id="GO:0043565">
    <property type="term" value="F:sequence-specific DNA binding"/>
    <property type="evidence" value="ECO:0007669"/>
    <property type="project" value="InterPro"/>
</dbReference>
<dbReference type="GO" id="GO:0034605">
    <property type="term" value="P:cellular response to heat"/>
    <property type="evidence" value="ECO:0000315"/>
    <property type="project" value="CGD"/>
</dbReference>
<dbReference type="GO" id="GO:0045893">
    <property type="term" value="P:positive regulation of DNA-templated transcription"/>
    <property type="evidence" value="ECO:0000304"/>
    <property type="project" value="CGD"/>
</dbReference>
<dbReference type="GO" id="GO:0045944">
    <property type="term" value="P:positive regulation of transcription by RNA polymerase II"/>
    <property type="evidence" value="ECO:0000315"/>
    <property type="project" value="CGD"/>
</dbReference>
<dbReference type="FunFam" id="1.10.10.10:FF:000027">
    <property type="entry name" value="Heat shock transcription factor 1"/>
    <property type="match status" value="1"/>
</dbReference>
<dbReference type="Gene3D" id="1.10.10.10">
    <property type="entry name" value="Winged helix-like DNA-binding domain superfamily/Winged helix DNA-binding domain"/>
    <property type="match status" value="1"/>
</dbReference>
<dbReference type="InterPro" id="IPR000232">
    <property type="entry name" value="HSF_DNA-bd"/>
</dbReference>
<dbReference type="InterPro" id="IPR036388">
    <property type="entry name" value="WH-like_DNA-bd_sf"/>
</dbReference>
<dbReference type="InterPro" id="IPR036390">
    <property type="entry name" value="WH_DNA-bd_sf"/>
</dbReference>
<dbReference type="PANTHER" id="PTHR10015:SF427">
    <property type="entry name" value="HEAT SHOCK FACTOR PROTEIN"/>
    <property type="match status" value="1"/>
</dbReference>
<dbReference type="PANTHER" id="PTHR10015">
    <property type="entry name" value="HEAT SHOCK TRANSCRIPTION FACTOR"/>
    <property type="match status" value="1"/>
</dbReference>
<dbReference type="Pfam" id="PF00447">
    <property type="entry name" value="HSF_DNA-bind"/>
    <property type="match status" value="1"/>
</dbReference>
<dbReference type="PRINTS" id="PR00056">
    <property type="entry name" value="HSFDOMAIN"/>
</dbReference>
<dbReference type="SMART" id="SM00415">
    <property type="entry name" value="HSF"/>
    <property type="match status" value="1"/>
</dbReference>
<dbReference type="SUPFAM" id="SSF46785">
    <property type="entry name" value="Winged helix' DNA-binding domain"/>
    <property type="match status" value="1"/>
</dbReference>
<dbReference type="PROSITE" id="PS00434">
    <property type="entry name" value="HSF_DOMAIN"/>
    <property type="match status" value="1"/>
</dbReference>
<organism>
    <name type="scientific">Candida albicans (strain SC5314 / ATCC MYA-2876)</name>
    <name type="common">Yeast</name>
    <dbReference type="NCBI Taxonomy" id="237561"/>
    <lineage>
        <taxon>Eukaryota</taxon>
        <taxon>Fungi</taxon>
        <taxon>Dikarya</taxon>
        <taxon>Ascomycota</taxon>
        <taxon>Saccharomycotina</taxon>
        <taxon>Pichiomycetes</taxon>
        <taxon>Debaryomycetaceae</taxon>
        <taxon>Candida/Lodderomyces clade</taxon>
        <taxon>Candida</taxon>
    </lineage>
</organism>
<reference key="1">
    <citation type="journal article" date="2004" name="Proc. Natl. Acad. Sci. U.S.A.">
        <title>The diploid genome sequence of Candida albicans.</title>
        <authorList>
            <person name="Jones T."/>
            <person name="Federspiel N.A."/>
            <person name="Chibana H."/>
            <person name="Dungan J."/>
            <person name="Kalman S."/>
            <person name="Magee B.B."/>
            <person name="Newport G."/>
            <person name="Thorstenson Y.R."/>
            <person name="Agabian N."/>
            <person name="Magee P.T."/>
            <person name="Davis R.W."/>
            <person name="Scherer S."/>
        </authorList>
    </citation>
    <scope>NUCLEOTIDE SEQUENCE [LARGE SCALE GENOMIC DNA]</scope>
    <source>
        <strain>SC5314 / ATCC MYA-2876</strain>
    </source>
</reference>
<reference key="2">
    <citation type="journal article" date="2007" name="Genome Biol.">
        <title>Assembly of the Candida albicans genome into sixteen supercontigs aligned on the eight chromosomes.</title>
        <authorList>
            <person name="van het Hoog M."/>
            <person name="Rast T.J."/>
            <person name="Martchenko M."/>
            <person name="Grindle S."/>
            <person name="Dignard D."/>
            <person name="Hogues H."/>
            <person name="Cuomo C."/>
            <person name="Berriman M."/>
            <person name="Scherer S."/>
            <person name="Magee B.B."/>
            <person name="Whiteway M."/>
            <person name="Chibana H."/>
            <person name="Nantel A."/>
            <person name="Magee P.T."/>
        </authorList>
    </citation>
    <scope>GENOME REANNOTATION</scope>
    <source>
        <strain>SC5314 / ATCC MYA-2876</strain>
    </source>
</reference>
<reference key="3">
    <citation type="journal article" date="2013" name="Genome Biol.">
        <title>Assembly of a phased diploid Candida albicans genome facilitates allele-specific measurements and provides a simple model for repeat and indel structure.</title>
        <authorList>
            <person name="Muzzey D."/>
            <person name="Schwartz K."/>
            <person name="Weissman J.S."/>
            <person name="Sherlock G."/>
        </authorList>
    </citation>
    <scope>NUCLEOTIDE SEQUENCE [LARGE SCALE GENOMIC DNA]</scope>
    <scope>GENOME REANNOTATION</scope>
    <source>
        <strain>SC5314 / ATCC MYA-2876</strain>
    </source>
</reference>
<reference key="4">
    <citation type="journal article" date="1999" name="Yeast">
        <title>Identification of a gene encoding the pyruvate decarboxylase gene regulator CaPdc2p from Candida albicans.</title>
        <authorList>
            <person name="Kaiser B."/>
            <person name="Munder T."/>
            <person name="Saluz H.P."/>
            <person name="Kuenkel W."/>
            <person name="Eck R."/>
        </authorList>
    </citation>
    <scope>IDENTIFICATION</scope>
</reference>
<reference key="5">
    <citation type="journal article" date="2008" name="Mol. Biol. Cell">
        <title>MNL1 regulates weak acid-induced stress responses of the fungal pathogen Candida albicans.</title>
        <authorList>
            <person name="Ramsdale M."/>
            <person name="Selway L."/>
            <person name="Stead D."/>
            <person name="Walker J."/>
            <person name="Yin Z."/>
            <person name="Nicholls S.M."/>
            <person name="Crowe J."/>
            <person name="Sheils E.M."/>
            <person name="Brown A.J."/>
        </authorList>
    </citation>
    <scope>INDUCTION</scope>
</reference>
<reference key="6">
    <citation type="journal article" date="2009" name="Mol. Microbiol.">
        <title>Role of the heat shock transcription factor, Hsf1, in a major fungal pathogen that is obligately associated with warm-blooded animals.</title>
        <authorList>
            <person name="Nicholls S."/>
            <person name="Leach M.D."/>
            <person name="Priest C.L."/>
            <person name="Brown A.J."/>
        </authorList>
    </citation>
    <scope>FUNCTION</scope>
    <scope>PHOSPHORYLATION</scope>
    <scope>DISRUPTION PHENOTYPE</scope>
</reference>
<reference key="7">
    <citation type="journal article" date="2011" name="Fungal Genet. Biol.">
        <title>Activation of the heat shock transcription factor Hsf1 is essential for the full virulence of the fungal pathogen Candida albicans.</title>
        <authorList>
            <person name="Nicholls S."/>
            <person name="MacCallum D.M."/>
            <person name="Kaffarnik F.A."/>
            <person name="Selway L."/>
            <person name="Peck S.C."/>
            <person name="Brown A.J."/>
        </authorList>
    </citation>
    <scope>FUNCTION</scope>
    <scope>PHOSPHORYLATION AT SER-570; THR-574; SER-576 AND THR-577</scope>
    <scope>MUTAGENESIS OF SER-570; THR-574; SER-576 AND THR-577</scope>
</reference>
<reference key="8">
    <citation type="journal article" date="2012" name="PLoS ONE">
        <title>Modelling the regulation of thermal adaptation in Candida albicans, a major fungal pathogen of humans.</title>
        <authorList>
            <person name="Leach M.D."/>
            <person name="Tyc K.M."/>
            <person name="Brown A.J."/>
            <person name="Klipp E."/>
        </authorList>
    </citation>
    <scope>FUNCTION</scope>
    <scope>PHOSPHORYLATION</scope>
</reference>
<reference key="9">
    <citation type="journal article" date="2012" name="PLoS Pathog.">
        <title>Hsp90 orchestrates transcriptional regulation by Hsf1 and cell wall remodelling by MAPK signalling during thermal adaptation in a pathogenic yeast.</title>
        <authorList>
            <person name="Leach M.D."/>
            <person name="Budge S."/>
            <person name="Walker L."/>
            <person name="Munro C."/>
            <person name="Cowen L.E."/>
            <person name="Brown A.J."/>
        </authorList>
    </citation>
    <scope>FUNCTION</scope>
    <scope>INTERACTION WITH HSP90</scope>
</reference>
<name>HSF_CANAL</name>
<evidence type="ECO:0000250" key="1">
    <source>
        <dbReference type="UniProtKB" id="P10961"/>
    </source>
</evidence>
<evidence type="ECO:0000250" key="2">
    <source>
        <dbReference type="UniProtKB" id="P22121"/>
    </source>
</evidence>
<evidence type="ECO:0000255" key="3"/>
<evidence type="ECO:0000256" key="4">
    <source>
        <dbReference type="SAM" id="MobiDB-lite"/>
    </source>
</evidence>
<evidence type="ECO:0000269" key="5">
    <source>
    </source>
</evidence>
<evidence type="ECO:0000269" key="6">
    <source>
    </source>
</evidence>
<evidence type="ECO:0000269" key="7">
    <source>
    </source>
</evidence>
<evidence type="ECO:0000269" key="8">
    <source>
    </source>
</evidence>
<evidence type="ECO:0000269" key="9">
    <source>
    </source>
</evidence>
<evidence type="ECO:0000303" key="10">
    <source>
    </source>
</evidence>
<evidence type="ECO:0000305" key="11"/>
<evidence type="ECO:0000312" key="12">
    <source>
        <dbReference type="CGD" id="CAL0000175059"/>
    </source>
</evidence>
<keyword id="KW-0010">Activator</keyword>
<keyword id="KW-0175">Coiled coil</keyword>
<keyword id="KW-0238">DNA-binding</keyword>
<keyword id="KW-0539">Nucleus</keyword>
<keyword id="KW-0597">Phosphoprotein</keyword>
<keyword id="KW-1185">Reference proteome</keyword>
<keyword id="KW-0346">Stress response</keyword>
<keyword id="KW-0804">Transcription</keyword>
<keyword id="KW-0805">Transcription regulation</keyword>
<keyword id="KW-0843">Virulence</keyword>
<proteinExistence type="evidence at protein level"/>
<protein>
    <recommendedName>
        <fullName evidence="10">Heat shock transcription factor</fullName>
        <shortName evidence="11">HSTF</shortName>
    </recommendedName>
    <alternativeName>
        <fullName evidence="11">Heat shock factor protein</fullName>
        <shortName evidence="11">HSF</shortName>
    </alternativeName>
</protein>